<sequence length="112" mass="13426">MDLMPLEKARAIEIAFDNVFHNTKIPDNLQQFDAILKRLERRRFIPTENQKPRVYETELLVLRFREFGVKDNHNHPINLHSLRSKSLIRAQGKKLDLHNRVFLRRNVRAVKM</sequence>
<evidence type="ECO:0000269" key="1">
    <source>
    </source>
</evidence>
<evidence type="ECO:0000269" key="2">
    <source>
    </source>
</evidence>
<evidence type="ECO:0000269" key="3">
    <source>
    </source>
</evidence>
<evidence type="ECO:0000303" key="4">
    <source>
    </source>
</evidence>
<evidence type="ECO:0000303" key="5">
    <source>
    </source>
</evidence>
<evidence type="ECO:0000303" key="6">
    <source>
    </source>
</evidence>
<evidence type="ECO:0000305" key="7"/>
<evidence type="ECO:0007829" key="8">
    <source>
        <dbReference type="PDB" id="6S29"/>
    </source>
</evidence>
<organism>
    <name type="scientific">Schizosaccharomyces pombe (strain 972 / ATCC 24843)</name>
    <name type="common">Fission yeast</name>
    <dbReference type="NCBI Taxonomy" id="284812"/>
    <lineage>
        <taxon>Eukaryota</taxon>
        <taxon>Fungi</taxon>
        <taxon>Dikarya</taxon>
        <taxon>Ascomycota</taxon>
        <taxon>Taphrinomycotina</taxon>
        <taxon>Schizosaccharomycetes</taxon>
        <taxon>Schizosaccharomycetales</taxon>
        <taxon>Schizosaccharomycetaceae</taxon>
        <taxon>Schizosaccharomyces</taxon>
    </lineage>
</organism>
<gene>
    <name evidence="4" type="primary">mis19</name>
    <name evidence="5" type="synonym">eic1</name>
    <name evidence="6" type="synonym">kis1</name>
    <name type="ORF">SPBC27B12.02</name>
    <name type="ORF">SPBC30B4.10</name>
</gene>
<proteinExistence type="evidence at protein level"/>
<feature type="chain" id="PRO_0000116509" description="CENP-A recruiting complex protein mis19">
    <location>
        <begin position="1"/>
        <end position="112"/>
    </location>
</feature>
<feature type="mutagenesis site" description="In mis19-1: Leads to a chromosome missegregation phenotype that results in large and small daughter nuclei." evidence="1">
    <original>F</original>
    <variation>I</variation>
    <location>
        <position position="32"/>
    </location>
</feature>
<feature type="mutagenesis site" description="In kis1-1: Leads to defective kinetochore-microtubule attachment." evidence="3">
    <original>R</original>
    <variation>C</variation>
    <location>
        <position position="65"/>
    </location>
</feature>
<feature type="strand" evidence="8">
    <location>
        <begin position="58"/>
        <end position="62"/>
    </location>
</feature>
<feature type="helix" evidence="8">
    <location>
        <begin position="79"/>
        <end position="97"/>
    </location>
</feature>
<feature type="helix" evidence="8">
    <location>
        <begin position="104"/>
        <end position="111"/>
    </location>
</feature>
<name>MIS19_SCHPO</name>
<accession>O42995</accession>
<protein>
    <recommendedName>
        <fullName evidence="7">CENP-A recruiting complex protein mis19</fullName>
    </recommendedName>
    <alternativeName>
        <fullName evidence="5">Eighteen-interacting centromere protein 1</fullName>
    </alternativeName>
    <alternativeName>
        <fullName evidence="7">Kinetochore protein mis19</fullName>
    </alternativeName>
</protein>
<comment type="function">
    <text evidence="1 2 3">Component of the CENP-A recruiting complex that ensures the integrity of mitotic spindles through maintenance of kinetochore factors mis6/CENP-I and cnp1/CENP-A (PubMed:24774534, PubMed:24789708, PubMed:25375240). Links mis16 and mis18 to recruit CENP-A through interacting with non-sense-mediated mRNA decay (NMD) factors and the SWI/SNF complex (PubMed:24774534). Also links mis18 with the CCAN/mis6/ctf19 complex to promote CENP-A assembly (PubMed:24789708).</text>
</comment>
<comment type="subunit">
    <text evidence="1 2 3">Component of the CENP-A recruiting complex composed of at least mis16, mis19, mis19 and mis20 (PubMed:24774534, PubMed:24789708, PubMed:25375240).</text>
</comment>
<comment type="subcellular location">
    <subcellularLocation>
        <location evidence="1 2 3">Chromosome</location>
        <location evidence="1 2 3">Centromere</location>
    </subcellularLocation>
    <subcellularLocation>
        <location evidence="3">Chromosome</location>
        <location evidence="3">Centromere</location>
        <location evidence="3">Kinetochore</location>
    </subcellularLocation>
    <text evidence="1 3">Localizes at the centromeres during interphase, but not in mitosis (PubMed:24774534, PubMed:25375240).</text>
</comment>
<reference key="1">
    <citation type="journal article" date="2002" name="Nature">
        <title>The genome sequence of Schizosaccharomyces pombe.</title>
        <authorList>
            <person name="Wood V."/>
            <person name="Gwilliam R."/>
            <person name="Rajandream M.A."/>
            <person name="Lyne M.H."/>
            <person name="Lyne R."/>
            <person name="Stewart A."/>
            <person name="Sgouros J.G."/>
            <person name="Peat N."/>
            <person name="Hayles J."/>
            <person name="Baker S.G."/>
            <person name="Basham D."/>
            <person name="Bowman S."/>
            <person name="Brooks K."/>
            <person name="Brown D."/>
            <person name="Brown S."/>
            <person name="Chillingworth T."/>
            <person name="Churcher C.M."/>
            <person name="Collins M."/>
            <person name="Connor R."/>
            <person name="Cronin A."/>
            <person name="Davis P."/>
            <person name="Feltwell T."/>
            <person name="Fraser A."/>
            <person name="Gentles S."/>
            <person name="Goble A."/>
            <person name="Hamlin N."/>
            <person name="Harris D.E."/>
            <person name="Hidalgo J."/>
            <person name="Hodgson G."/>
            <person name="Holroyd S."/>
            <person name="Hornsby T."/>
            <person name="Howarth S."/>
            <person name="Huckle E.J."/>
            <person name="Hunt S."/>
            <person name="Jagels K."/>
            <person name="James K.D."/>
            <person name="Jones L."/>
            <person name="Jones M."/>
            <person name="Leather S."/>
            <person name="McDonald S."/>
            <person name="McLean J."/>
            <person name="Mooney P."/>
            <person name="Moule S."/>
            <person name="Mungall K.L."/>
            <person name="Murphy L.D."/>
            <person name="Niblett D."/>
            <person name="Odell C."/>
            <person name="Oliver K."/>
            <person name="O'Neil S."/>
            <person name="Pearson D."/>
            <person name="Quail M.A."/>
            <person name="Rabbinowitsch E."/>
            <person name="Rutherford K.M."/>
            <person name="Rutter S."/>
            <person name="Saunders D."/>
            <person name="Seeger K."/>
            <person name="Sharp S."/>
            <person name="Skelton J."/>
            <person name="Simmonds M.N."/>
            <person name="Squares R."/>
            <person name="Squares S."/>
            <person name="Stevens K."/>
            <person name="Taylor K."/>
            <person name="Taylor R.G."/>
            <person name="Tivey A."/>
            <person name="Walsh S.V."/>
            <person name="Warren T."/>
            <person name="Whitehead S."/>
            <person name="Woodward J.R."/>
            <person name="Volckaert G."/>
            <person name="Aert R."/>
            <person name="Robben J."/>
            <person name="Grymonprez B."/>
            <person name="Weltjens I."/>
            <person name="Vanstreels E."/>
            <person name="Rieger M."/>
            <person name="Schaefer M."/>
            <person name="Mueller-Auer S."/>
            <person name="Gabel C."/>
            <person name="Fuchs M."/>
            <person name="Duesterhoeft A."/>
            <person name="Fritzc C."/>
            <person name="Holzer E."/>
            <person name="Moestl D."/>
            <person name="Hilbert H."/>
            <person name="Borzym K."/>
            <person name="Langer I."/>
            <person name="Beck A."/>
            <person name="Lehrach H."/>
            <person name="Reinhardt R."/>
            <person name="Pohl T.M."/>
            <person name="Eger P."/>
            <person name="Zimmermann W."/>
            <person name="Wedler H."/>
            <person name="Wambutt R."/>
            <person name="Purnelle B."/>
            <person name="Goffeau A."/>
            <person name="Cadieu E."/>
            <person name="Dreano S."/>
            <person name="Gloux S."/>
            <person name="Lelaure V."/>
            <person name="Mottier S."/>
            <person name="Galibert F."/>
            <person name="Aves S.J."/>
            <person name="Xiang Z."/>
            <person name="Hunt C."/>
            <person name="Moore K."/>
            <person name="Hurst S.M."/>
            <person name="Lucas M."/>
            <person name="Rochet M."/>
            <person name="Gaillardin C."/>
            <person name="Tallada V.A."/>
            <person name="Garzon A."/>
            <person name="Thode G."/>
            <person name="Daga R.R."/>
            <person name="Cruzado L."/>
            <person name="Jimenez J."/>
            <person name="Sanchez M."/>
            <person name="del Rey F."/>
            <person name="Benito J."/>
            <person name="Dominguez A."/>
            <person name="Revuelta J.L."/>
            <person name="Moreno S."/>
            <person name="Armstrong J."/>
            <person name="Forsburg S.L."/>
            <person name="Cerutti L."/>
            <person name="Lowe T."/>
            <person name="McCombie W.R."/>
            <person name="Paulsen I."/>
            <person name="Potashkin J."/>
            <person name="Shpakovski G.V."/>
            <person name="Ussery D."/>
            <person name="Barrell B.G."/>
            <person name="Nurse P."/>
        </authorList>
    </citation>
    <scope>NUCLEOTIDE SEQUENCE [LARGE SCALE GENOMIC DNA]</scope>
    <source>
        <strain>972 / ATCC 24843</strain>
    </source>
</reference>
<reference key="2">
    <citation type="journal article" date="2011" name="Science">
        <title>Comparative functional genomics of the fission yeasts.</title>
        <authorList>
            <person name="Rhind N."/>
            <person name="Chen Z."/>
            <person name="Yassour M."/>
            <person name="Thompson D.A."/>
            <person name="Haas B.J."/>
            <person name="Habib N."/>
            <person name="Wapinski I."/>
            <person name="Roy S."/>
            <person name="Lin M.F."/>
            <person name="Heiman D.I."/>
            <person name="Young S.K."/>
            <person name="Furuya K."/>
            <person name="Guo Y."/>
            <person name="Pidoux A."/>
            <person name="Chen H.M."/>
            <person name="Robbertse B."/>
            <person name="Goldberg J.M."/>
            <person name="Aoki K."/>
            <person name="Bayne E.H."/>
            <person name="Berlin A.M."/>
            <person name="Desjardins C.A."/>
            <person name="Dobbs E."/>
            <person name="Dukaj L."/>
            <person name="Fan L."/>
            <person name="FitzGerald M.G."/>
            <person name="French C."/>
            <person name="Gujja S."/>
            <person name="Hansen K."/>
            <person name="Keifenheim D."/>
            <person name="Levin J.Z."/>
            <person name="Mosher R.A."/>
            <person name="Mueller C.A."/>
            <person name="Pfiffner J."/>
            <person name="Priest M."/>
            <person name="Russ C."/>
            <person name="Smialowska A."/>
            <person name="Swoboda P."/>
            <person name="Sykes S.M."/>
            <person name="Vaughn M."/>
            <person name="Vengrova S."/>
            <person name="Yoder R."/>
            <person name="Zeng Q."/>
            <person name="Allshire R."/>
            <person name="Baulcombe D."/>
            <person name="Birren B.W."/>
            <person name="Brown W."/>
            <person name="Ekwall K."/>
            <person name="Kellis M."/>
            <person name="Leatherwood J."/>
            <person name="Levin H."/>
            <person name="Margalit H."/>
            <person name="Martienssen R."/>
            <person name="Nieduszynski C.A."/>
            <person name="Spatafora J.W."/>
            <person name="Friedman N."/>
            <person name="Dalgaard J.Z."/>
            <person name="Baumann P."/>
            <person name="Niki H."/>
            <person name="Regev A."/>
            <person name="Nusbaum C."/>
        </authorList>
    </citation>
    <scope>REVISION OF GENE MODEL</scope>
</reference>
<reference key="3">
    <citation type="journal article" date="2014" name="Genes Cells">
        <title>Schizosaccharomyces pombe centromere protein Mis19 links Mis16 and Mis18 to recruit CENP-A through interacting with NMD factors and the SWI/SNF complex.</title>
        <authorList>
            <person name="Hayashi T."/>
            <person name="Ebe M."/>
            <person name="Nagao K."/>
            <person name="Kokubu A."/>
            <person name="Sajiki K."/>
            <person name="Yanagida M."/>
        </authorList>
    </citation>
    <scope>FUNCTION</scope>
    <scope>IDENTIFICATION IN THE CENP-A RECRUITING COMPLEX</scope>
    <scope>SUBCELLULAR LOCATION</scope>
    <scope>MUTAGENESIS OF PHE-32</scope>
</reference>
<reference key="4">
    <citation type="journal article" date="2014" name="Open Biol.">
        <title>Eic1 links Mis18 with the CCAN/Mis6/Ctf19 complex to promote CENP-A assembly.</title>
        <authorList>
            <person name="Subramanian L."/>
            <person name="Toda N.R."/>
            <person name="Rappsilber J."/>
            <person name="Allshire R.C."/>
        </authorList>
    </citation>
    <scope>FUNCTION</scope>
    <scope>IDENTIFICATION IN THE CENP-A RECRUITING COMPLEX</scope>
    <scope>SUBCELLULAR LOCATION</scope>
</reference>
<reference key="5">
    <citation type="journal article" date="2014" name="PLoS ONE">
        <title>The kinetochore protein Kis1/Eic1/Mis19 ensures the integrity of mitotic spindles through maintenance of kinetochore factors Mis6/CENP-I and CENP-A.</title>
        <authorList>
            <person name="Hirai H."/>
            <person name="Arai K."/>
            <person name="Kariyazono R."/>
            <person name="Yamamoto M."/>
            <person name="Sato M."/>
        </authorList>
    </citation>
    <scope>FUNCTION</scope>
    <scope>IDENTIFICATION IN THE CENP-A RECRUITING COMPLEX</scope>
    <scope>SUBCELLULAR LOCATION</scope>
    <scope>MUTAGENESIS OF ARG-65</scope>
</reference>
<dbReference type="EMBL" id="CU329671">
    <property type="protein sequence ID" value="CAB63198.2"/>
    <property type="molecule type" value="Genomic_DNA"/>
</dbReference>
<dbReference type="PIR" id="T40026">
    <property type="entry name" value="T40026"/>
</dbReference>
<dbReference type="RefSeq" id="NP_595535.2">
    <property type="nucleotide sequence ID" value="NM_001021445.2"/>
</dbReference>
<dbReference type="PDB" id="5WJC">
    <property type="method" value="X-ray"/>
    <property type="resolution" value="2.30 A"/>
    <property type="chains" value="B=1-112"/>
</dbReference>
<dbReference type="PDB" id="6S29">
    <property type="method" value="X-ray"/>
    <property type="resolution" value="1.99 A"/>
    <property type="chains" value="B/D=52-112"/>
</dbReference>
<dbReference type="PDBsum" id="5WJC"/>
<dbReference type="PDBsum" id="6S29"/>
<dbReference type="SMR" id="O42995"/>
<dbReference type="BioGRID" id="276898">
    <property type="interactions" value="17"/>
</dbReference>
<dbReference type="STRING" id="284812.O42995"/>
<dbReference type="PaxDb" id="4896-SPBC27B12.02.1"/>
<dbReference type="EnsemblFungi" id="SPBC27B12.02.1">
    <property type="protein sequence ID" value="SPBC27B12.02.1:pep"/>
    <property type="gene ID" value="SPBC27B12.02"/>
</dbReference>
<dbReference type="GeneID" id="2540369"/>
<dbReference type="KEGG" id="spo:2540369"/>
<dbReference type="PomBase" id="SPBC27B12.02">
    <property type="gene designation" value="mis19"/>
</dbReference>
<dbReference type="VEuPathDB" id="FungiDB:SPBC27B12.02"/>
<dbReference type="HOGENOM" id="CLU_2110385_0_0_1"/>
<dbReference type="InParanoid" id="O42995"/>
<dbReference type="OMA" id="RANSWTQ"/>
<dbReference type="PRO" id="PR:O42995"/>
<dbReference type="Proteomes" id="UP000002485">
    <property type="component" value="Chromosome II"/>
</dbReference>
<dbReference type="GO" id="GO:0098654">
    <property type="term" value="C:CENP-A recruiting complex"/>
    <property type="evidence" value="ECO:0000314"/>
    <property type="project" value="PomBase"/>
</dbReference>
<dbReference type="GO" id="GO:0034506">
    <property type="term" value="C:chromosome, centromeric core domain"/>
    <property type="evidence" value="ECO:0000269"/>
    <property type="project" value="PomBase"/>
</dbReference>
<dbReference type="GO" id="GO:0000776">
    <property type="term" value="C:kinetochore"/>
    <property type="evidence" value="ECO:0000269"/>
    <property type="project" value="PomBase"/>
</dbReference>
<dbReference type="GO" id="GO:0005654">
    <property type="term" value="C:nucleoplasm"/>
    <property type="evidence" value="ECO:0000314"/>
    <property type="project" value="PomBase"/>
</dbReference>
<dbReference type="GO" id="GO:0051315">
    <property type="term" value="P:attachment of mitotic spindle microtubules to kinetochore"/>
    <property type="evidence" value="ECO:0000315"/>
    <property type="project" value="PomBase"/>
</dbReference>
<dbReference type="GO" id="GO:0051301">
    <property type="term" value="P:cell division"/>
    <property type="evidence" value="ECO:0007669"/>
    <property type="project" value="UniProtKB-KW"/>
</dbReference>
<dbReference type="GO" id="GO:0000070">
    <property type="term" value="P:mitotic sister chromatid segregation"/>
    <property type="evidence" value="ECO:0000315"/>
    <property type="project" value="PomBase"/>
</dbReference>
<dbReference type="GO" id="GO:0071459">
    <property type="term" value="P:protein localization to chromosome, centromeric region"/>
    <property type="evidence" value="ECO:0000315"/>
    <property type="project" value="PomBase"/>
</dbReference>
<keyword id="KW-0002">3D-structure</keyword>
<keyword id="KW-0131">Cell cycle</keyword>
<keyword id="KW-0132">Cell division</keyword>
<keyword id="KW-0137">Centromere</keyword>
<keyword id="KW-0158">Chromosome</keyword>
<keyword id="KW-0995">Kinetochore</keyword>
<keyword id="KW-0498">Mitosis</keyword>
<keyword id="KW-1185">Reference proteome</keyword>